<name>RS6_PHOV8</name>
<sequence length="114" mass="13428">MNQYETVFILTPVLSDVQMKEAVEKFKGILTAEGAEIINEENWGLKKLAYPIQKKSTGFYQLIEFKAEPQVIEKLEINFRRDERVIRFLTFKMDKYAAEYAAKRRNVKSTKKED</sequence>
<reference key="1">
    <citation type="journal article" date="2007" name="PLoS Biol.">
        <title>Evolution of symbiotic bacteria in the distal human intestine.</title>
        <authorList>
            <person name="Xu J."/>
            <person name="Mahowald M.A."/>
            <person name="Ley R.E."/>
            <person name="Lozupone C.A."/>
            <person name="Hamady M."/>
            <person name="Martens E.C."/>
            <person name="Henrissat B."/>
            <person name="Coutinho P.M."/>
            <person name="Minx P."/>
            <person name="Latreille P."/>
            <person name="Cordum H."/>
            <person name="Van Brunt A."/>
            <person name="Kim K."/>
            <person name="Fulton R.S."/>
            <person name="Fulton L.A."/>
            <person name="Clifton S.W."/>
            <person name="Wilson R.K."/>
            <person name="Knight R.D."/>
            <person name="Gordon J.I."/>
        </authorList>
    </citation>
    <scope>NUCLEOTIDE SEQUENCE [LARGE SCALE GENOMIC DNA]</scope>
    <source>
        <strain>ATCC 8482 / DSM 1447 / JCM 5826 / CCUG 4940 / NBRC 14291 / NCTC 11154</strain>
    </source>
</reference>
<evidence type="ECO:0000255" key="1">
    <source>
        <dbReference type="HAMAP-Rule" id="MF_00360"/>
    </source>
</evidence>
<evidence type="ECO:0000305" key="2"/>
<organism>
    <name type="scientific">Phocaeicola vulgatus (strain ATCC 8482 / DSM 1447 / JCM 5826 / CCUG 4940 / NBRC 14291 / NCTC 11154)</name>
    <name type="common">Bacteroides vulgatus</name>
    <dbReference type="NCBI Taxonomy" id="435590"/>
    <lineage>
        <taxon>Bacteria</taxon>
        <taxon>Pseudomonadati</taxon>
        <taxon>Bacteroidota</taxon>
        <taxon>Bacteroidia</taxon>
        <taxon>Bacteroidales</taxon>
        <taxon>Bacteroidaceae</taxon>
        <taxon>Phocaeicola</taxon>
    </lineage>
</organism>
<proteinExistence type="inferred from homology"/>
<keyword id="KW-0687">Ribonucleoprotein</keyword>
<keyword id="KW-0689">Ribosomal protein</keyword>
<keyword id="KW-0694">RNA-binding</keyword>
<keyword id="KW-0699">rRNA-binding</keyword>
<dbReference type="EMBL" id="CP000139">
    <property type="protein sequence ID" value="ABR37743.1"/>
    <property type="molecule type" value="Genomic_DNA"/>
</dbReference>
<dbReference type="RefSeq" id="WP_005841177.1">
    <property type="nucleotide sequence ID" value="NZ_JANSWM010000070.1"/>
</dbReference>
<dbReference type="SMR" id="A6KWD7"/>
<dbReference type="STRING" id="435590.BVU_0013"/>
<dbReference type="PaxDb" id="435590-BVU_0013"/>
<dbReference type="GeneID" id="5300983"/>
<dbReference type="KEGG" id="bvu:BVU_0013"/>
<dbReference type="eggNOG" id="COG0360">
    <property type="taxonomic scope" value="Bacteria"/>
</dbReference>
<dbReference type="HOGENOM" id="CLU_113441_4_3_10"/>
<dbReference type="BioCyc" id="BVUL435590:G1G59-14-MONOMER"/>
<dbReference type="Proteomes" id="UP000002861">
    <property type="component" value="Chromosome"/>
</dbReference>
<dbReference type="GO" id="GO:0005737">
    <property type="term" value="C:cytoplasm"/>
    <property type="evidence" value="ECO:0007669"/>
    <property type="project" value="UniProtKB-ARBA"/>
</dbReference>
<dbReference type="GO" id="GO:1990904">
    <property type="term" value="C:ribonucleoprotein complex"/>
    <property type="evidence" value="ECO:0007669"/>
    <property type="project" value="UniProtKB-KW"/>
</dbReference>
<dbReference type="GO" id="GO:0005840">
    <property type="term" value="C:ribosome"/>
    <property type="evidence" value="ECO:0007669"/>
    <property type="project" value="UniProtKB-KW"/>
</dbReference>
<dbReference type="GO" id="GO:0070181">
    <property type="term" value="F:small ribosomal subunit rRNA binding"/>
    <property type="evidence" value="ECO:0007669"/>
    <property type="project" value="TreeGrafter"/>
</dbReference>
<dbReference type="GO" id="GO:0003735">
    <property type="term" value="F:structural constituent of ribosome"/>
    <property type="evidence" value="ECO:0007669"/>
    <property type="project" value="InterPro"/>
</dbReference>
<dbReference type="GO" id="GO:0006412">
    <property type="term" value="P:translation"/>
    <property type="evidence" value="ECO:0007669"/>
    <property type="project" value="UniProtKB-UniRule"/>
</dbReference>
<dbReference type="CDD" id="cd00473">
    <property type="entry name" value="bS6"/>
    <property type="match status" value="1"/>
</dbReference>
<dbReference type="FunFam" id="3.30.70.60:FF:000011">
    <property type="entry name" value="30S ribosomal protein S6"/>
    <property type="match status" value="1"/>
</dbReference>
<dbReference type="Gene3D" id="3.30.70.60">
    <property type="match status" value="1"/>
</dbReference>
<dbReference type="HAMAP" id="MF_00360">
    <property type="entry name" value="Ribosomal_bS6"/>
    <property type="match status" value="1"/>
</dbReference>
<dbReference type="InterPro" id="IPR000529">
    <property type="entry name" value="Ribosomal_bS6"/>
</dbReference>
<dbReference type="InterPro" id="IPR035980">
    <property type="entry name" value="Ribosomal_bS6_sf"/>
</dbReference>
<dbReference type="InterPro" id="IPR020814">
    <property type="entry name" value="Ribosomal_S6_plastid/chlpt"/>
</dbReference>
<dbReference type="InterPro" id="IPR014717">
    <property type="entry name" value="Transl_elong_EF1B/ribsomal_bS6"/>
</dbReference>
<dbReference type="NCBIfam" id="TIGR00166">
    <property type="entry name" value="S6"/>
    <property type="match status" value="1"/>
</dbReference>
<dbReference type="PANTHER" id="PTHR21011">
    <property type="entry name" value="MITOCHONDRIAL 28S RIBOSOMAL PROTEIN S6"/>
    <property type="match status" value="1"/>
</dbReference>
<dbReference type="PANTHER" id="PTHR21011:SF1">
    <property type="entry name" value="SMALL RIBOSOMAL SUBUNIT PROTEIN BS6M"/>
    <property type="match status" value="1"/>
</dbReference>
<dbReference type="Pfam" id="PF01250">
    <property type="entry name" value="Ribosomal_S6"/>
    <property type="match status" value="1"/>
</dbReference>
<dbReference type="SUPFAM" id="SSF54995">
    <property type="entry name" value="Ribosomal protein S6"/>
    <property type="match status" value="1"/>
</dbReference>
<protein>
    <recommendedName>
        <fullName evidence="1">Small ribosomal subunit protein bS6</fullName>
    </recommendedName>
    <alternativeName>
        <fullName evidence="2">30S ribosomal protein S6</fullName>
    </alternativeName>
</protein>
<comment type="function">
    <text evidence="1">Binds together with bS18 to 16S ribosomal RNA.</text>
</comment>
<comment type="similarity">
    <text evidence="1">Belongs to the bacterial ribosomal protein bS6 family.</text>
</comment>
<feature type="chain" id="PRO_1000005218" description="Small ribosomal subunit protein bS6">
    <location>
        <begin position="1"/>
        <end position="114"/>
    </location>
</feature>
<accession>A6KWD7</accession>
<gene>
    <name evidence="1" type="primary">rpsF</name>
    <name type="ordered locus">BVU_0013</name>
</gene>